<reference evidence="4" key="1">
    <citation type="journal article" date="2009" name="BMC Evol. Biol.">
        <title>A proteomic approach for studying insect phylogeny: CAPA peptides of ancient insect taxa (Dictyoptera, Blattoptera) as a test case.</title>
        <authorList>
            <person name="Roth S."/>
            <person name="Fromm B."/>
            <person name="Gaede G."/>
            <person name="Predel R."/>
        </authorList>
    </citation>
    <scope>PROTEIN SEQUENCE</scope>
    <scope>AMIDATION AT VAL-11</scope>
    <source>
        <tissue evidence="2">Abdominal perisympathetic organs</tissue>
    </source>
</reference>
<feature type="peptide" id="PRO_0000378847" description="Periviscerokinin-3" evidence="2">
    <location>
        <begin position="1"/>
        <end position="11"/>
    </location>
</feature>
<feature type="modified residue" description="Valine amide" evidence="2">
    <location>
        <position position="11"/>
    </location>
</feature>
<protein>
    <recommendedName>
        <fullName evidence="3">Periviscerokinin-3</fullName>
        <shortName evidence="3">PerSu-PVK-3</shortName>
    </recommendedName>
</protein>
<organism>
    <name type="scientific">Perisphaeria cf. substylifera (strain SR-2005)</name>
    <name type="common">Cockroach</name>
    <dbReference type="NCBI Taxonomy" id="348760"/>
    <lineage>
        <taxon>Eukaryota</taxon>
        <taxon>Metazoa</taxon>
        <taxon>Ecdysozoa</taxon>
        <taxon>Arthropoda</taxon>
        <taxon>Hexapoda</taxon>
        <taxon>Insecta</taxon>
        <taxon>Pterygota</taxon>
        <taxon>Neoptera</taxon>
        <taxon>Polyneoptera</taxon>
        <taxon>Dictyoptera</taxon>
        <taxon>Blattodea</taxon>
        <taxon>Blaberoidea</taxon>
        <taxon>Blaberidae</taxon>
        <taxon>Perisphaerinae</taxon>
        <taxon>Perisphaeria</taxon>
    </lineage>
</organism>
<comment type="function">
    <text evidence="4">Mediates visceral muscle contractile activity (myotropic activity).</text>
</comment>
<comment type="subcellular location">
    <subcellularLocation>
        <location evidence="4">Secreted</location>
    </subcellularLocation>
</comment>
<comment type="similarity">
    <text evidence="1">Belongs to the periviscerokinin family.</text>
</comment>
<dbReference type="GO" id="GO:0005576">
    <property type="term" value="C:extracellular region"/>
    <property type="evidence" value="ECO:0007669"/>
    <property type="project" value="UniProtKB-SubCell"/>
</dbReference>
<dbReference type="GO" id="GO:0007218">
    <property type="term" value="P:neuropeptide signaling pathway"/>
    <property type="evidence" value="ECO:0007669"/>
    <property type="project" value="UniProtKB-KW"/>
</dbReference>
<dbReference type="InterPro" id="IPR013231">
    <property type="entry name" value="Periviscerokinin"/>
</dbReference>
<dbReference type="Pfam" id="PF08259">
    <property type="entry name" value="Periviscerokin"/>
    <property type="match status" value="1"/>
</dbReference>
<accession>P85729</accession>
<evidence type="ECO:0000255" key="1"/>
<evidence type="ECO:0000269" key="2">
    <source>
    </source>
</evidence>
<evidence type="ECO:0000303" key="3">
    <source>
    </source>
</evidence>
<evidence type="ECO:0000305" key="4"/>
<keyword id="KW-0027">Amidation</keyword>
<keyword id="KW-0903">Direct protein sequencing</keyword>
<keyword id="KW-0527">Neuropeptide</keyword>
<keyword id="KW-0964">Secreted</keyword>
<sequence>GSSGMIPFPRV</sequence>
<name>PVK3_PERSR</name>
<proteinExistence type="evidence at protein level"/>